<dbReference type="EMBL" id="AP008231">
    <property type="protein sequence ID" value="BAD78833.1"/>
    <property type="molecule type" value="Genomic_DNA"/>
</dbReference>
<dbReference type="RefSeq" id="WP_011242955.1">
    <property type="nucleotide sequence ID" value="NZ_CP085785.1"/>
</dbReference>
<dbReference type="SMR" id="Q5N4D6"/>
<dbReference type="GeneID" id="72429746"/>
<dbReference type="KEGG" id="syc:syc0643_c"/>
<dbReference type="eggNOG" id="COG0851">
    <property type="taxonomic scope" value="Bacteria"/>
</dbReference>
<dbReference type="Proteomes" id="UP000001175">
    <property type="component" value="Chromosome"/>
</dbReference>
<dbReference type="GO" id="GO:0051301">
    <property type="term" value="P:cell division"/>
    <property type="evidence" value="ECO:0007669"/>
    <property type="project" value="UniProtKB-KW"/>
</dbReference>
<dbReference type="GO" id="GO:0032955">
    <property type="term" value="P:regulation of division septum assembly"/>
    <property type="evidence" value="ECO:0007669"/>
    <property type="project" value="InterPro"/>
</dbReference>
<dbReference type="Gene3D" id="3.30.1070.10">
    <property type="entry name" value="Cell division topological specificity factor MinE"/>
    <property type="match status" value="1"/>
</dbReference>
<dbReference type="HAMAP" id="MF_00262">
    <property type="entry name" value="MinE"/>
    <property type="match status" value="1"/>
</dbReference>
<dbReference type="InterPro" id="IPR005527">
    <property type="entry name" value="MinE"/>
</dbReference>
<dbReference type="InterPro" id="IPR036707">
    <property type="entry name" value="MinE_sf"/>
</dbReference>
<dbReference type="NCBIfam" id="TIGR01215">
    <property type="entry name" value="minE"/>
    <property type="match status" value="1"/>
</dbReference>
<dbReference type="NCBIfam" id="NF001422">
    <property type="entry name" value="PRK00296.1"/>
    <property type="match status" value="1"/>
</dbReference>
<dbReference type="Pfam" id="PF03776">
    <property type="entry name" value="MinE"/>
    <property type="match status" value="1"/>
</dbReference>
<dbReference type="SUPFAM" id="SSF55229">
    <property type="entry name" value="Cell division protein MinE topological specificity domain"/>
    <property type="match status" value="1"/>
</dbReference>
<keyword id="KW-0131">Cell cycle</keyword>
<keyword id="KW-0132">Cell division</keyword>
<organism>
    <name type="scientific">Synechococcus sp. (strain ATCC 27144 / PCC 6301 / SAUG 1402/1)</name>
    <name type="common">Anacystis nidulans</name>
    <dbReference type="NCBI Taxonomy" id="269084"/>
    <lineage>
        <taxon>Bacteria</taxon>
        <taxon>Bacillati</taxon>
        <taxon>Cyanobacteriota</taxon>
        <taxon>Cyanophyceae</taxon>
        <taxon>Synechococcales</taxon>
        <taxon>Synechococcaceae</taxon>
        <taxon>Synechococcus</taxon>
    </lineage>
</organism>
<reference key="1">
    <citation type="journal article" date="2007" name="Photosyn. Res.">
        <title>Complete nucleotide sequence of the freshwater unicellular cyanobacterium Synechococcus elongatus PCC 6301 chromosome: gene content and organization.</title>
        <authorList>
            <person name="Sugita C."/>
            <person name="Ogata K."/>
            <person name="Shikata M."/>
            <person name="Jikuya H."/>
            <person name="Takano J."/>
            <person name="Furumichi M."/>
            <person name="Kanehisa M."/>
            <person name="Omata T."/>
            <person name="Sugiura M."/>
            <person name="Sugita M."/>
        </authorList>
    </citation>
    <scope>NUCLEOTIDE SEQUENCE [LARGE SCALE GENOMIC DNA]</scope>
    <source>
        <strain>ATCC 27144 / PCC 6301 / SAUG 1402/1</strain>
    </source>
</reference>
<feature type="chain" id="PRO_0000298196" description="Cell division topological specificity factor">
    <location>
        <begin position="1"/>
        <end position="91"/>
    </location>
</feature>
<accession>Q5N4D6</accession>
<name>MINE_SYNP6</name>
<proteinExistence type="inferred from homology"/>
<protein>
    <recommendedName>
        <fullName evidence="1">Cell division topological specificity factor</fullName>
    </recommendedName>
</protein>
<evidence type="ECO:0000255" key="1">
    <source>
        <dbReference type="HAMAP-Rule" id="MF_00262"/>
    </source>
</evidence>
<comment type="function">
    <text evidence="1">Prevents the cell division inhibition by proteins MinC and MinD at internal division sites while permitting inhibition at polar sites. This ensures cell division at the proper site by restricting the formation of a division septum at the midpoint of the long axis of the cell.</text>
</comment>
<comment type="similarity">
    <text evidence="1">Belongs to the MinE family.</text>
</comment>
<gene>
    <name evidence="1" type="primary">minE</name>
    <name type="ordered locus">syc0643_c</name>
</gene>
<sequence>MLADLFERLFPRQQASRDTVKQRLKLVLAHDRADLSPELLQKMRQEILEVVSRYVELDSEGMELSLENDQRVTALVANLPIRRVKPATAEG</sequence>